<reference key="1">
    <citation type="journal article" date="2004" name="Nature">
        <title>Genome evolution in yeasts.</title>
        <authorList>
            <person name="Dujon B."/>
            <person name="Sherman D."/>
            <person name="Fischer G."/>
            <person name="Durrens P."/>
            <person name="Casaregola S."/>
            <person name="Lafontaine I."/>
            <person name="de Montigny J."/>
            <person name="Marck C."/>
            <person name="Neuveglise C."/>
            <person name="Talla E."/>
            <person name="Goffard N."/>
            <person name="Frangeul L."/>
            <person name="Aigle M."/>
            <person name="Anthouard V."/>
            <person name="Babour A."/>
            <person name="Barbe V."/>
            <person name="Barnay S."/>
            <person name="Blanchin S."/>
            <person name="Beckerich J.-M."/>
            <person name="Beyne E."/>
            <person name="Bleykasten C."/>
            <person name="Boisrame A."/>
            <person name="Boyer J."/>
            <person name="Cattolico L."/>
            <person name="Confanioleri F."/>
            <person name="de Daruvar A."/>
            <person name="Despons L."/>
            <person name="Fabre E."/>
            <person name="Fairhead C."/>
            <person name="Ferry-Dumazet H."/>
            <person name="Groppi A."/>
            <person name="Hantraye F."/>
            <person name="Hennequin C."/>
            <person name="Jauniaux N."/>
            <person name="Joyet P."/>
            <person name="Kachouri R."/>
            <person name="Kerrest A."/>
            <person name="Koszul R."/>
            <person name="Lemaire M."/>
            <person name="Lesur I."/>
            <person name="Ma L."/>
            <person name="Muller H."/>
            <person name="Nicaud J.-M."/>
            <person name="Nikolski M."/>
            <person name="Oztas S."/>
            <person name="Ozier-Kalogeropoulos O."/>
            <person name="Pellenz S."/>
            <person name="Potier S."/>
            <person name="Richard G.-F."/>
            <person name="Straub M.-L."/>
            <person name="Suleau A."/>
            <person name="Swennen D."/>
            <person name="Tekaia F."/>
            <person name="Wesolowski-Louvel M."/>
            <person name="Westhof E."/>
            <person name="Wirth B."/>
            <person name="Zeniou-Meyer M."/>
            <person name="Zivanovic Y."/>
            <person name="Bolotin-Fukuhara M."/>
            <person name="Thierry A."/>
            <person name="Bouchier C."/>
            <person name="Caudron B."/>
            <person name="Scarpelli C."/>
            <person name="Gaillardin C."/>
            <person name="Weissenbach J."/>
            <person name="Wincker P."/>
            <person name="Souciet J.-L."/>
        </authorList>
    </citation>
    <scope>NUCLEOTIDE SEQUENCE [LARGE SCALE GENOMIC DNA]</scope>
    <source>
        <strain>ATCC 2001 / BCRC 20586 / JCM 3761 / NBRC 0622 / NRRL Y-65 / CBS 138</strain>
    </source>
</reference>
<proteinExistence type="inferred from homology"/>
<evidence type="ECO:0000250" key="1"/>
<evidence type="ECO:0000255" key="2"/>
<evidence type="ECO:0000305" key="3"/>
<comment type="function">
    <text evidence="1">Component of the MICOS complex, a large protein complex of the mitochondrial inner membrane that plays crucial roles in the maintenance of crista junctions, inner membrane architecture, and formation of contact sites to the outer membrane.</text>
</comment>
<comment type="subunit">
    <text evidence="1">Component of the mitochondrial contact site and cristae organizing system (MICOS) complex.</text>
</comment>
<comment type="subcellular location">
    <subcellularLocation>
        <location evidence="1">Mitochondrion inner membrane</location>
        <topology evidence="1">Single-pass membrane protein</topology>
    </subcellularLocation>
</comment>
<comment type="similarity">
    <text evidence="3">Belongs to the MICOS complex subunit Mic12 family.</text>
</comment>
<accession>Q6FQ45</accession>
<sequence length="114" mass="13560">MSKIAKLGSFTLVSGVVATSCYYYFIDRDGYHYKRSVWKQVGDEVQRVIDRKPSLVFSKEKYGDQFDYDYKVSGERVERVPVDHKQLVLRYNSETMKDLWNKEVRALVDWVYSR</sequence>
<keyword id="KW-0472">Membrane</keyword>
<keyword id="KW-0496">Mitochondrion</keyword>
<keyword id="KW-0999">Mitochondrion inner membrane</keyword>
<keyword id="KW-1185">Reference proteome</keyword>
<keyword id="KW-0812">Transmembrane</keyword>
<keyword id="KW-1133">Transmembrane helix</keyword>
<gene>
    <name type="primary">AIM5</name>
    <name type="synonym">FMP51</name>
    <name type="ordered locus">CAGL0I09262g</name>
</gene>
<feature type="chain" id="PRO_0000399889" description="MICOS complex subunit MIC12">
    <location>
        <begin position="1"/>
        <end position="114"/>
    </location>
</feature>
<feature type="transmembrane region" description="Helical" evidence="2">
    <location>
        <begin position="4"/>
        <end position="26"/>
    </location>
</feature>
<organism>
    <name type="scientific">Candida glabrata (strain ATCC 2001 / BCRC 20586 / JCM 3761 / NBRC 0622 / NRRL Y-65 / CBS 138)</name>
    <name type="common">Yeast</name>
    <name type="synonym">Nakaseomyces glabratus</name>
    <dbReference type="NCBI Taxonomy" id="284593"/>
    <lineage>
        <taxon>Eukaryota</taxon>
        <taxon>Fungi</taxon>
        <taxon>Dikarya</taxon>
        <taxon>Ascomycota</taxon>
        <taxon>Saccharomycotina</taxon>
        <taxon>Saccharomycetes</taxon>
        <taxon>Saccharomycetales</taxon>
        <taxon>Saccharomycetaceae</taxon>
        <taxon>Nakaseomyces</taxon>
    </lineage>
</organism>
<dbReference type="EMBL" id="CR380955">
    <property type="protein sequence ID" value="CAG60586.1"/>
    <property type="molecule type" value="Genomic_DNA"/>
</dbReference>
<dbReference type="RefSeq" id="XP_447649.1">
    <property type="nucleotide sequence ID" value="XM_447649.1"/>
</dbReference>
<dbReference type="FunCoup" id="Q6FQ45">
    <property type="interactions" value="56"/>
</dbReference>
<dbReference type="STRING" id="284593.Q6FQ45"/>
<dbReference type="EnsemblFungi" id="CAGL0I09262g-T">
    <property type="protein sequence ID" value="CAGL0I09262g-T-p1"/>
    <property type="gene ID" value="CAGL0I09262g"/>
</dbReference>
<dbReference type="KEGG" id="cgr:2889123"/>
<dbReference type="CGD" id="CAL0132312">
    <property type="gene designation" value="CAGL0I09262g"/>
</dbReference>
<dbReference type="VEuPathDB" id="FungiDB:B1J91_I09262g"/>
<dbReference type="VEuPathDB" id="FungiDB:CAGL0I09262g"/>
<dbReference type="eggNOG" id="ENOG502S8MU">
    <property type="taxonomic scope" value="Eukaryota"/>
</dbReference>
<dbReference type="HOGENOM" id="CLU_164154_0_0_1"/>
<dbReference type="InParanoid" id="Q6FQ45"/>
<dbReference type="OMA" id="DIWNEQI"/>
<dbReference type="Proteomes" id="UP000002428">
    <property type="component" value="Chromosome I"/>
</dbReference>
<dbReference type="GO" id="GO:0061617">
    <property type="term" value="C:MICOS complex"/>
    <property type="evidence" value="ECO:0007669"/>
    <property type="project" value="InterPro"/>
</dbReference>
<dbReference type="GO" id="GO:0044284">
    <property type="term" value="C:mitochondrial crista junction"/>
    <property type="evidence" value="ECO:0007669"/>
    <property type="project" value="InterPro"/>
</dbReference>
<dbReference type="GO" id="GO:0042407">
    <property type="term" value="P:cristae formation"/>
    <property type="evidence" value="ECO:0007669"/>
    <property type="project" value="InterPro"/>
</dbReference>
<dbReference type="InterPro" id="IPR031463">
    <property type="entry name" value="Mic12"/>
</dbReference>
<dbReference type="Pfam" id="PF17050">
    <property type="entry name" value="AIM5"/>
    <property type="match status" value="1"/>
</dbReference>
<protein>
    <recommendedName>
        <fullName>MICOS complex subunit MIC12</fullName>
    </recommendedName>
    <alternativeName>
        <fullName>Altered inheritance of mitochondria protein 5, mitochondrial</fullName>
    </alternativeName>
    <alternativeName>
        <fullName>Found in mitochondrial proteome protein 51</fullName>
    </alternativeName>
</protein>
<name>MIC12_CANGA</name>